<protein>
    <recommendedName>
        <fullName>Cathepsin D</fullName>
        <ecNumber>3.4.23.5</ecNumber>
    </recommendedName>
</protein>
<feature type="signal peptide" evidence="1">
    <location>
        <begin position="1"/>
        <end position="18"/>
    </location>
</feature>
<feature type="propeptide" id="PRO_0000045434" description="Activation peptide" evidence="1">
    <location>
        <begin position="19"/>
        <end position="64"/>
    </location>
</feature>
<feature type="chain" id="PRO_0000045435" description="Cathepsin D">
    <location>
        <begin position="65"/>
        <end position="410"/>
    </location>
</feature>
<feature type="domain" description="Peptidase A1" evidence="5">
    <location>
        <begin position="79"/>
        <end position="405"/>
    </location>
</feature>
<feature type="active site" evidence="6">
    <location>
        <position position="97"/>
    </location>
</feature>
<feature type="active site" evidence="6">
    <location>
        <position position="293"/>
    </location>
</feature>
<feature type="glycosylation site" description="N-linked (GlcNAc...) asparagine" evidence="4">
    <location>
        <position position="134"/>
    </location>
</feature>
<feature type="glycosylation site" description="N-linked (GlcNAc...) asparagine" evidence="4">
    <location>
        <position position="261"/>
    </location>
</feature>
<feature type="disulfide bond" evidence="1">
    <location>
        <begin position="91"/>
        <end position="160"/>
    </location>
</feature>
<feature type="disulfide bond" evidence="1">
    <location>
        <begin position="110"/>
        <end position="117"/>
    </location>
</feature>
<feature type="disulfide bond" evidence="1">
    <location>
        <begin position="284"/>
        <end position="288"/>
    </location>
</feature>
<feature type="disulfide bond" evidence="1">
    <location>
        <begin position="327"/>
        <end position="364"/>
    </location>
</feature>
<feature type="sequence variant" evidence="7">
    <original>K</original>
    <variation>T</variation>
    <location>
        <position position="254"/>
    </location>
</feature>
<accession>Q4LAL9</accession>
<sequence>MQPPSLLLLVLGLLAAPAAALVRIPLHKFTSVRRTMTELGGPVEDLIAKGPISKYAQGAPAVTGGPIPEMLRNYMDAQYYGEIGIGTPPQCFTVVFDTGSSNLWVPSIHCKLLDIACWIHHKYNSGKSSTYVKNGTSFDIHYGSGSLSGYLSQDTVSVPCKSALSGLAGIKVERQTFGEATKQPGITFIAAKFDGILGMAYPRISVNNVLPVFDNLMQQKLVEKNIFSFYLNRDPNAQPGGELMLGGTDSKYYKGPLSYLNVTRKAYWQVHMEQVDVGSSLTLCKGGCEAIVDTGTSLIVGPVDEVRELQKAIGAVPLIQGEYMIPCEKVSTLPDVTLKLGGKLYKLSSEDYTLKVSQGGKTICLSGFMGMDIPPPGGPLWILGDVFIGCYYTVFDRDQNRVGLAQATRL</sequence>
<comment type="function">
    <text evidence="2">Acid protease active in intracellular protein breakdown. Plays a role in APP processing following cleavage and activation by ADAM30 which leads to APP degradation.</text>
</comment>
<comment type="catalytic activity">
    <reaction>
        <text>Specificity similar to, but narrower than, that of pepsin A. Does not cleave the 4-Gln-|-His-5 bond in B chain of insulin.</text>
        <dbReference type="EC" id="3.4.23.5"/>
    </reaction>
</comment>
<comment type="subunit">
    <text evidence="2 3">Consists of a light chain and a heavy chain. Interacts with ADAM30; this leads to activation of CTSD. Interacts with GRN; stabilizes CTSD; increases its proteolytic activity (By similarity).</text>
</comment>
<comment type="subcellular location">
    <subcellularLocation>
        <location>Lysosome</location>
    </subcellularLocation>
    <subcellularLocation>
        <location evidence="1">Melanosome</location>
    </subcellularLocation>
    <subcellularLocation>
        <location evidence="1">Secreted</location>
        <location evidence="1">Extracellular space</location>
    </subcellularLocation>
</comment>
<comment type="PTM">
    <text evidence="2">N- and O-glycosylated.</text>
</comment>
<comment type="PTM">
    <text evidence="2">Undergoes proteolytic cleavage and activation by ADAM30.</text>
</comment>
<comment type="similarity">
    <text evidence="8">Belongs to the peptidase A1 family.</text>
</comment>
<organism>
    <name type="scientific">Canis lupus familiaris</name>
    <name type="common">Dog</name>
    <name type="synonym">Canis familiaris</name>
    <dbReference type="NCBI Taxonomy" id="9615"/>
    <lineage>
        <taxon>Eukaryota</taxon>
        <taxon>Metazoa</taxon>
        <taxon>Chordata</taxon>
        <taxon>Craniata</taxon>
        <taxon>Vertebrata</taxon>
        <taxon>Euteleostomi</taxon>
        <taxon>Mammalia</taxon>
        <taxon>Eutheria</taxon>
        <taxon>Laurasiatheria</taxon>
        <taxon>Carnivora</taxon>
        <taxon>Caniformia</taxon>
        <taxon>Canidae</taxon>
        <taxon>Canis</taxon>
    </lineage>
</organism>
<evidence type="ECO:0000250" key="1"/>
<evidence type="ECO:0000250" key="2">
    <source>
        <dbReference type="UniProtKB" id="P07339"/>
    </source>
</evidence>
<evidence type="ECO:0000250" key="3">
    <source>
        <dbReference type="UniProtKB" id="P18242"/>
    </source>
</evidence>
<evidence type="ECO:0000255" key="4"/>
<evidence type="ECO:0000255" key="5">
    <source>
        <dbReference type="PROSITE-ProRule" id="PRU01103"/>
    </source>
</evidence>
<evidence type="ECO:0000255" key="6">
    <source>
        <dbReference type="PROSITE-ProRule" id="PRU10094"/>
    </source>
</evidence>
<evidence type="ECO:0000269" key="7">
    <source>
    </source>
</evidence>
<evidence type="ECO:0000305" key="8"/>
<keyword id="KW-0064">Aspartyl protease</keyword>
<keyword id="KW-1015">Disulfide bond</keyword>
<keyword id="KW-0325">Glycoprotein</keyword>
<keyword id="KW-0378">Hydrolase</keyword>
<keyword id="KW-0458">Lysosome</keyword>
<keyword id="KW-0645">Protease</keyword>
<keyword id="KW-1185">Reference proteome</keyword>
<keyword id="KW-0964">Secreted</keyword>
<keyword id="KW-0732">Signal</keyword>
<keyword id="KW-0865">Zymogen</keyword>
<reference key="1">
    <citation type="journal article" date="2005" name="Anim. Genet.">
        <title>The canine CTSD gene as a candidate for late-onset neuronal ceroid lipofuscinosis.</title>
        <authorList>
            <person name="Woehlke A."/>
            <person name="Distl O."/>
            <person name="Droegemueller C."/>
        </authorList>
    </citation>
    <scope>NUCLEOTIDE SEQUENCE [MRNA]</scope>
    <scope>VARIANT THR-254</scope>
    <source>
        <strain>Beagle</strain>
        <tissue>Lung</tissue>
    </source>
</reference>
<proteinExistence type="evidence at transcript level"/>
<name>CATD_CANLF</name>
<gene>
    <name type="primary">CTSD</name>
</gene>
<dbReference type="EC" id="3.4.23.5"/>
<dbReference type="EMBL" id="AM048627">
    <property type="protein sequence ID" value="CAJ14973.1"/>
    <property type="molecule type" value="mRNA"/>
</dbReference>
<dbReference type="RefSeq" id="NP_001020792.1">
    <property type="nucleotide sequence ID" value="NM_001025621.1"/>
</dbReference>
<dbReference type="SMR" id="Q4LAL9"/>
<dbReference type="FunCoup" id="Q4LAL9">
    <property type="interactions" value="999"/>
</dbReference>
<dbReference type="STRING" id="9615.ENSCAFP00000014791"/>
<dbReference type="MEROPS" id="A01.009"/>
<dbReference type="GlyCosmos" id="Q4LAL9">
    <property type="glycosylation" value="2 sites, No reported glycans"/>
</dbReference>
<dbReference type="PaxDb" id="9612-ENSCAFP00000014791"/>
<dbReference type="Ensembl" id="ENSCAFT00000015991.5">
    <property type="protein sequence ID" value="ENSCAFP00000014791.3"/>
    <property type="gene ID" value="ENSCAFG00000010052.5"/>
</dbReference>
<dbReference type="Ensembl" id="ENSCAFT00040045867.1">
    <property type="protein sequence ID" value="ENSCAFP00040040020.1"/>
    <property type="gene ID" value="ENSCAFG00040024588.1"/>
</dbReference>
<dbReference type="Ensembl" id="ENSCAFT00845017589.1">
    <property type="protein sequence ID" value="ENSCAFP00845013693.1"/>
    <property type="gene ID" value="ENSCAFG00845009905.1"/>
</dbReference>
<dbReference type="GeneID" id="483662"/>
<dbReference type="KEGG" id="cfa:483662"/>
<dbReference type="CTD" id="1509"/>
<dbReference type="VEuPathDB" id="HostDB:ENSCAFG00845009905"/>
<dbReference type="VGNC" id="VGNC:103052">
    <property type="gene designation" value="CTSD"/>
</dbReference>
<dbReference type="eggNOG" id="KOG1339">
    <property type="taxonomic scope" value="Eukaryota"/>
</dbReference>
<dbReference type="GeneTree" id="ENSGT00940000155733"/>
<dbReference type="HOGENOM" id="CLU_013253_3_1_1"/>
<dbReference type="InParanoid" id="Q4LAL9"/>
<dbReference type="OMA" id="KYDHDAS"/>
<dbReference type="OrthoDB" id="771136at2759"/>
<dbReference type="TreeFam" id="TF314990"/>
<dbReference type="Reactome" id="R-CFA-1442490">
    <property type="pathway name" value="Collagen degradation"/>
</dbReference>
<dbReference type="Reactome" id="R-CFA-2022377">
    <property type="pathway name" value="Metabolism of Angiotensinogen to Angiotensins"/>
</dbReference>
<dbReference type="Reactome" id="R-CFA-2132295">
    <property type="pathway name" value="MHC class II antigen presentation"/>
</dbReference>
<dbReference type="Reactome" id="R-CFA-6798695">
    <property type="pathway name" value="Neutrophil degranulation"/>
</dbReference>
<dbReference type="Reactome" id="R-CFA-77387">
    <property type="pathway name" value="Insulin receptor recycling"/>
</dbReference>
<dbReference type="Proteomes" id="UP000002254">
    <property type="component" value="Chromosome 18"/>
</dbReference>
<dbReference type="Proteomes" id="UP000694429">
    <property type="component" value="Unplaced"/>
</dbReference>
<dbReference type="Proteomes" id="UP000694542">
    <property type="component" value="Chromosome 18"/>
</dbReference>
<dbReference type="Proteomes" id="UP000805418">
    <property type="component" value="Chromosome 18"/>
</dbReference>
<dbReference type="Bgee" id="ENSCAFG00000010052">
    <property type="expression patterns" value="Expressed in mucosa of urinary bladder and 44 other cell types or tissues"/>
</dbReference>
<dbReference type="GO" id="GO:0031904">
    <property type="term" value="C:endosome lumen"/>
    <property type="evidence" value="ECO:0007669"/>
    <property type="project" value="Ensembl"/>
</dbReference>
<dbReference type="GO" id="GO:0005615">
    <property type="term" value="C:extracellular space"/>
    <property type="evidence" value="ECO:0000318"/>
    <property type="project" value="GO_Central"/>
</dbReference>
<dbReference type="GO" id="GO:0005764">
    <property type="term" value="C:lysosome"/>
    <property type="evidence" value="ECO:0000250"/>
    <property type="project" value="UniProtKB"/>
</dbReference>
<dbReference type="GO" id="GO:0042470">
    <property type="term" value="C:melanosome"/>
    <property type="evidence" value="ECO:0007669"/>
    <property type="project" value="UniProtKB-SubCell"/>
</dbReference>
<dbReference type="GO" id="GO:0004190">
    <property type="term" value="F:aspartic-type endopeptidase activity"/>
    <property type="evidence" value="ECO:0000318"/>
    <property type="project" value="GO_Central"/>
</dbReference>
<dbReference type="GO" id="GO:0000045">
    <property type="term" value="P:autophagosome assembly"/>
    <property type="evidence" value="ECO:0007669"/>
    <property type="project" value="Ensembl"/>
</dbReference>
<dbReference type="GO" id="GO:1901143">
    <property type="term" value="P:insulin catabolic process"/>
    <property type="evidence" value="ECO:0007669"/>
    <property type="project" value="Ensembl"/>
</dbReference>
<dbReference type="GO" id="GO:0038020">
    <property type="term" value="P:insulin receptor recycling"/>
    <property type="evidence" value="ECO:0007669"/>
    <property type="project" value="Ensembl"/>
</dbReference>
<dbReference type="GO" id="GO:0006508">
    <property type="term" value="P:proteolysis"/>
    <property type="evidence" value="ECO:0000318"/>
    <property type="project" value="GO_Central"/>
</dbReference>
<dbReference type="CDD" id="cd05490">
    <property type="entry name" value="Cathepsin_D2"/>
    <property type="match status" value="1"/>
</dbReference>
<dbReference type="FunFam" id="2.40.70.10:FF:000039">
    <property type="entry name" value="Cathepsin D preproprotein"/>
    <property type="match status" value="1"/>
</dbReference>
<dbReference type="FunFam" id="2.40.70.10:FF:000047">
    <property type="entry name" value="Cathepsin D preproprotein"/>
    <property type="match status" value="1"/>
</dbReference>
<dbReference type="Gene3D" id="2.40.70.10">
    <property type="entry name" value="Acid Proteases"/>
    <property type="match status" value="2"/>
</dbReference>
<dbReference type="InterPro" id="IPR001461">
    <property type="entry name" value="Aspartic_peptidase_A1"/>
</dbReference>
<dbReference type="InterPro" id="IPR001969">
    <property type="entry name" value="Aspartic_peptidase_AS"/>
</dbReference>
<dbReference type="InterPro" id="IPR012848">
    <property type="entry name" value="Aspartic_peptidase_N"/>
</dbReference>
<dbReference type="InterPro" id="IPR033144">
    <property type="entry name" value="Cathepsin_D"/>
</dbReference>
<dbReference type="InterPro" id="IPR033121">
    <property type="entry name" value="PEPTIDASE_A1"/>
</dbReference>
<dbReference type="InterPro" id="IPR021109">
    <property type="entry name" value="Peptidase_aspartic_dom_sf"/>
</dbReference>
<dbReference type="PANTHER" id="PTHR47966">
    <property type="entry name" value="BETA-SITE APP-CLEAVING ENZYME, ISOFORM A-RELATED"/>
    <property type="match status" value="1"/>
</dbReference>
<dbReference type="PANTHER" id="PTHR47966:SF42">
    <property type="entry name" value="CATHEPSIN D"/>
    <property type="match status" value="1"/>
</dbReference>
<dbReference type="Pfam" id="PF07966">
    <property type="entry name" value="A1_Propeptide"/>
    <property type="match status" value="1"/>
</dbReference>
<dbReference type="Pfam" id="PF00026">
    <property type="entry name" value="Asp"/>
    <property type="match status" value="1"/>
</dbReference>
<dbReference type="PRINTS" id="PR00792">
    <property type="entry name" value="PEPSIN"/>
</dbReference>
<dbReference type="SUPFAM" id="SSF50630">
    <property type="entry name" value="Acid proteases"/>
    <property type="match status" value="1"/>
</dbReference>
<dbReference type="PROSITE" id="PS00141">
    <property type="entry name" value="ASP_PROTEASE"/>
    <property type="match status" value="2"/>
</dbReference>
<dbReference type="PROSITE" id="PS51767">
    <property type="entry name" value="PEPTIDASE_A1"/>
    <property type="match status" value="1"/>
</dbReference>